<dbReference type="EMBL" id="M62488">
    <property type="protein sequence ID" value="AAA46733.1"/>
    <property type="molecule type" value="Genomic_DNA"/>
</dbReference>
<dbReference type="EMBL" id="L22858">
    <property type="protein sequence ID" value="AAA66783.1"/>
    <property type="molecule type" value="Genomic_DNA"/>
</dbReference>
<dbReference type="PIR" id="A43681">
    <property type="entry name" value="A43681"/>
</dbReference>
<dbReference type="PIR" id="C72869">
    <property type="entry name" value="C72869"/>
</dbReference>
<dbReference type="SMR" id="P23801"/>
<dbReference type="KEGG" id="vg:1403986"/>
<dbReference type="OrthoDB" id="8064at10239"/>
<dbReference type="Proteomes" id="UP000008292">
    <property type="component" value="Segment"/>
</dbReference>
<dbReference type="GO" id="GO:0042025">
    <property type="term" value="C:host cell nucleus"/>
    <property type="evidence" value="ECO:0000314"/>
    <property type="project" value="UniProtKB"/>
</dbReference>
<dbReference type="GO" id="GO:0003677">
    <property type="term" value="F:DNA binding"/>
    <property type="evidence" value="ECO:0007669"/>
    <property type="project" value="UniProtKB-KW"/>
</dbReference>
<dbReference type="GO" id="GO:0008270">
    <property type="term" value="F:zinc ion binding"/>
    <property type="evidence" value="ECO:0007669"/>
    <property type="project" value="UniProtKB-KW"/>
</dbReference>
<dbReference type="GO" id="GO:0006260">
    <property type="term" value="P:DNA replication"/>
    <property type="evidence" value="ECO:0007669"/>
    <property type="project" value="UniProtKB-KW"/>
</dbReference>
<dbReference type="GO" id="GO:0039693">
    <property type="term" value="P:viral DNA genome replication"/>
    <property type="evidence" value="ECO:0007669"/>
    <property type="project" value="UniProtKB-KW"/>
</dbReference>
<dbReference type="FunFam" id="3.30.40.10:FF:001298">
    <property type="entry name" value="Major immediate early protein"/>
    <property type="match status" value="1"/>
</dbReference>
<dbReference type="Gene3D" id="3.30.40.10">
    <property type="entry name" value="Zinc/RING finger domain, C3HC4 (zinc finger)"/>
    <property type="match status" value="1"/>
</dbReference>
<dbReference type="InterPro" id="IPR018957">
    <property type="entry name" value="Znf_C3HC4_RING-type"/>
</dbReference>
<dbReference type="InterPro" id="IPR001841">
    <property type="entry name" value="Znf_RING"/>
</dbReference>
<dbReference type="InterPro" id="IPR013083">
    <property type="entry name" value="Znf_RING/FYVE/PHD"/>
</dbReference>
<dbReference type="InterPro" id="IPR017907">
    <property type="entry name" value="Znf_RING_CS"/>
</dbReference>
<dbReference type="Pfam" id="PF00097">
    <property type="entry name" value="zf-C3HC4"/>
    <property type="match status" value="1"/>
</dbReference>
<dbReference type="SMART" id="SM00184">
    <property type="entry name" value="RING"/>
    <property type="match status" value="1"/>
</dbReference>
<dbReference type="SUPFAM" id="SSF57850">
    <property type="entry name" value="RING/U-box"/>
    <property type="match status" value="1"/>
</dbReference>
<dbReference type="PROSITE" id="PS00518">
    <property type="entry name" value="ZF_RING_1"/>
    <property type="match status" value="1"/>
</dbReference>
<dbReference type="PROSITE" id="PS50089">
    <property type="entry name" value="ZF_RING_2"/>
    <property type="match status" value="1"/>
</dbReference>
<keyword id="KW-0235">DNA replication</keyword>
<keyword id="KW-0238">DNA-binding</keyword>
<keyword id="KW-0244">Early protein</keyword>
<keyword id="KW-1048">Host nucleus</keyword>
<keyword id="KW-0479">Metal-binding</keyword>
<keyword id="KW-1185">Reference proteome</keyword>
<keyword id="KW-0804">Transcription</keyword>
<keyword id="KW-0805">Transcription regulation</keyword>
<keyword id="KW-1194">Viral DNA replication</keyword>
<keyword id="KW-0862">Zinc</keyword>
<keyword id="KW-0863">Zinc-finger</keyword>
<organismHost>
    <name type="scientific">Lepidoptera</name>
    <name type="common">butterflies and moths</name>
    <dbReference type="NCBI Taxonomy" id="7088"/>
</organismHost>
<gene>
    <name type="primary">PE38</name>
</gene>
<protein>
    <recommendedName>
        <fullName>Major immediate early protein</fullName>
    </recommendedName>
    <alternativeName>
        <fullName>PE-38</fullName>
    </alternativeName>
</protein>
<reference key="1">
    <citation type="journal article" date="1991" name="J. Virol.">
        <title>Identification of the very early transcribed baculovirus gene PE-38.</title>
        <authorList>
            <person name="Krappa R."/>
            <person name="Knebel-Moersdorf D."/>
        </authorList>
    </citation>
    <scope>NUCLEOTIDE SEQUENCE [GENOMIC DNA]</scope>
    <source>
        <strain>E</strain>
    </source>
</reference>
<reference key="2">
    <citation type="journal article" date="1994" name="Virology">
        <title>The complete DNA sequence of Autographa californica nuclear polyhedrosis virus.</title>
        <authorList>
            <person name="Ayres M.D."/>
            <person name="Howard S.C."/>
            <person name="Kuzio J."/>
            <person name="Lopez-Ferber M."/>
            <person name="Possee R.D."/>
        </authorList>
    </citation>
    <scope>NUCLEOTIDE SEQUENCE [LARGE SCALE GENOMIC DNA]</scope>
    <source>
        <strain>C6</strain>
    </source>
</reference>
<reference key="3">
    <citation type="journal article" date="1993" name="Virology">
        <title>Immediate-early baculovirus genes transactivate the p143 gene promoter of Autographa californica nuclear polyhedrosis virus.</title>
        <authorList>
            <person name="Lu A."/>
            <person name="Carstens E.B."/>
        </authorList>
    </citation>
    <scope>FUNCTION</scope>
</reference>
<reference key="4">
    <citation type="journal article" date="1994" name="Proc. Natl. Acad. Sci. U.S.A.">
        <title>Identification of genes involved in DNA replication of the Autographa californica baculovirus.</title>
        <authorList>
            <person name="Kool M."/>
            <person name="Ahrens C.H."/>
            <person name="Goldbach R.W."/>
            <person name="Rohrmann G.F."/>
            <person name="Vlak J.M."/>
        </authorList>
    </citation>
    <scope>FUNCTION</scope>
</reference>
<reference key="5">
    <citation type="journal article" date="1995" name="J. Virol.">
        <title>Expression of PE38 and IE2, viral members of the C3HC4 finger family, during baculovirus infection: PE38 and IE2 localize to distinct nuclear regions.</title>
        <authorList>
            <person name="Krappa R."/>
            <person name="Roncarati R."/>
            <person name="Knebel-Moersdorf D."/>
        </authorList>
    </citation>
    <scope>SUBCELLULAR LOCATION</scope>
</reference>
<reference key="6">
    <citation type="journal article" date="1999" name="J. Virol.">
        <title>The baculovirus PE38 protein augments apoptosis induced by transactivator IE1.</title>
        <authorList>
            <person name="Prikhod'ko E.A."/>
            <person name="Miller L.K."/>
        </authorList>
    </citation>
    <scope>FUNCTION</scope>
    <scope>SUBCELLULAR LOCATION</scope>
</reference>
<reference key="7">
    <citation type="journal article" date="2001" name="Exp. Cell Res.">
        <title>Dynamic nuclear localization of the baculovirus proteins IE2 and PE38 during the infection cycle: the promyelocytic leukemia protein colocalizes with IE2.</title>
        <authorList>
            <person name="Murges D."/>
            <person name="Quadt I."/>
            <person name="Schroeer J."/>
            <person name="Knebel-Moersdorf D."/>
        </authorList>
    </citation>
    <scope>SUBCELLULAR LOCATION</scope>
</reference>
<name>PE38_NPVAC</name>
<accession>P23801</accession>
<evidence type="ECO:0000255" key="1">
    <source>
        <dbReference type="PROSITE-ProRule" id="PRU00175"/>
    </source>
</evidence>
<evidence type="ECO:0000269" key="2">
    <source>
    </source>
</evidence>
<evidence type="ECO:0000269" key="3">
    <source>
    </source>
</evidence>
<evidence type="ECO:0000269" key="4">
    <source>
    </source>
</evidence>
<evidence type="ECO:0000269" key="5">
    <source>
    </source>
</evidence>
<evidence type="ECO:0000269" key="6">
    <source>
    </source>
</evidence>
<evidence type="ECO:0000305" key="7"/>
<feature type="chain" id="PRO_0000056347" description="Major immediate early protein">
    <location>
        <begin position="1"/>
        <end position="321"/>
    </location>
</feature>
<feature type="zinc finger region" description="RING-type" evidence="1">
    <location>
        <begin position="86"/>
        <end position="139"/>
    </location>
</feature>
<feature type="region of interest" description="Leucine-zipper">
    <location>
        <begin position="228"/>
        <end position="249"/>
    </location>
</feature>
<feature type="sequence conflict" description="In Ref. 1; AAA46733." evidence="7" ref="1">
    <original>G</original>
    <variation>R</variation>
    <location>
        <position position="291"/>
    </location>
</feature>
<comment type="function">
    <text evidence="2 5 6">Plays some regulatory role in both viral DNA replication and transcriptional transactivation.</text>
</comment>
<comment type="subcellular location">
    <subcellularLocation>
        <location evidence="2 3 4">Host nucleus</location>
    </subcellularLocation>
</comment>
<proteinExistence type="predicted"/>
<organism>
    <name type="scientific">Autographa californica nuclear polyhedrosis virus</name>
    <name type="common">AcMNPV</name>
    <dbReference type="NCBI Taxonomy" id="46015"/>
    <lineage>
        <taxon>Viruses</taxon>
        <taxon>Viruses incertae sedis</taxon>
        <taxon>Naldaviricetes</taxon>
        <taxon>Lefavirales</taxon>
        <taxon>Baculoviridae</taxon>
        <taxon>Alphabaculovirus</taxon>
        <taxon>Alphabaculovirus aucalifornicae</taxon>
    </lineage>
</organism>
<sequence length="321" mass="37425">MPRDTNNRHRSTPYERPTLEDLRRQLQDNLDSINRRDRMQEEQEENLRYQVRRRQRQNQLRSIQMEQQRMMAELNNEPVINFKFECSVCLETYSQQSNDTCPFLIPTTCDHGFCFKCVINLQSNAMNIPHSTVCCPLCNTQVKMWRSLKPNAVVTCKFYKKTQERVPPVQQYKNIIKVLQERSVISVEDNDNNCDINMENQAKIAALEAELEEEKNHSDQVASENRQLIEENTRLNEQIQELQHQVRTLVPQRGITVNQQIGRDDSAPAELNERFRSLVYSTISELFIENGVHSIQNYVYAGTSAASSCDVNVTVNFGFEN</sequence>